<proteinExistence type="evidence at protein level"/>
<organism>
    <name type="scientific">Homo sapiens</name>
    <name type="common">Human</name>
    <dbReference type="NCBI Taxonomy" id="9606"/>
    <lineage>
        <taxon>Eukaryota</taxon>
        <taxon>Metazoa</taxon>
        <taxon>Chordata</taxon>
        <taxon>Craniata</taxon>
        <taxon>Vertebrata</taxon>
        <taxon>Euteleostomi</taxon>
        <taxon>Mammalia</taxon>
        <taxon>Eutheria</taxon>
        <taxon>Euarchontoglires</taxon>
        <taxon>Primates</taxon>
        <taxon>Haplorrhini</taxon>
        <taxon>Catarrhini</taxon>
        <taxon>Hominidae</taxon>
        <taxon>Homo</taxon>
    </lineage>
</organism>
<dbReference type="EC" id="2.3.2.27" evidence="3 19"/>
<dbReference type="EMBL" id="AK054732">
    <property type="protein sequence ID" value="BAB70801.1"/>
    <property type="molecule type" value="mRNA"/>
</dbReference>
<dbReference type="EMBL" id="AK093113">
    <property type="protein sequence ID" value="BAC04060.1"/>
    <property type="status" value="ALT_INIT"/>
    <property type="molecule type" value="mRNA"/>
</dbReference>
<dbReference type="EMBL" id="AC092933">
    <property type="status" value="NOT_ANNOTATED_CDS"/>
    <property type="molecule type" value="Genomic_DNA"/>
</dbReference>
<dbReference type="EMBL" id="AC117490">
    <property type="status" value="NOT_ANNOTATED_CDS"/>
    <property type="molecule type" value="Genomic_DNA"/>
</dbReference>
<dbReference type="EMBL" id="BC033791">
    <property type="protein sequence ID" value="AAH33791.1"/>
    <property type="molecule type" value="mRNA"/>
</dbReference>
<dbReference type="CCDS" id="CCDS3317.1"/>
<dbReference type="RefSeq" id="NP_689830.2">
    <property type="nucleotide sequence ID" value="NM_152617.3"/>
</dbReference>
<dbReference type="PDB" id="3L11">
    <property type="method" value="X-ray"/>
    <property type="resolution" value="2.12 A"/>
    <property type="chains" value="A=1-113"/>
</dbReference>
<dbReference type="PDB" id="4GB0">
    <property type="method" value="X-ray"/>
    <property type="resolution" value="2.60 A"/>
    <property type="chains" value="A=1-111"/>
</dbReference>
<dbReference type="PDB" id="5XIS">
    <property type="method" value="X-ray"/>
    <property type="resolution" value="1.78 A"/>
    <property type="chains" value="A/D=110-188"/>
</dbReference>
<dbReference type="PDB" id="5XIT">
    <property type="method" value="X-ray"/>
    <property type="resolution" value="2.25 A"/>
    <property type="chains" value="A/E=113-188"/>
</dbReference>
<dbReference type="PDB" id="5XIU">
    <property type="method" value="X-ray"/>
    <property type="resolution" value="1.80 A"/>
    <property type="chains" value="A=419-462"/>
</dbReference>
<dbReference type="PDB" id="5YDK">
    <property type="method" value="X-ray"/>
    <property type="resolution" value="2.50 A"/>
    <property type="chains" value="A/F/G/L=113-194"/>
</dbReference>
<dbReference type="PDB" id="8SMW">
    <property type="method" value="EM"/>
    <property type="resolution" value="3.30 A"/>
    <property type="chains" value="K=1-93"/>
</dbReference>
<dbReference type="PDB" id="8SMX">
    <property type="method" value="EM"/>
    <property type="resolution" value="3.20 A"/>
    <property type="chains" value="K=1-93"/>
</dbReference>
<dbReference type="PDB" id="8SMY">
    <property type="method" value="EM"/>
    <property type="resolution" value="3.20 A"/>
    <property type="chains" value="K=1-93"/>
</dbReference>
<dbReference type="PDB" id="8SMZ">
    <property type="method" value="EM"/>
    <property type="resolution" value="3.20 A"/>
    <property type="chains" value="K=1-93"/>
</dbReference>
<dbReference type="PDB" id="8SN0">
    <property type="method" value="EM"/>
    <property type="resolution" value="3.20 A"/>
    <property type="chains" value="K=1-93"/>
</dbReference>
<dbReference type="PDB" id="8SN1">
    <property type="method" value="EM"/>
    <property type="resolution" value="3.30 A"/>
    <property type="chains" value="K=1-93"/>
</dbReference>
<dbReference type="PDB" id="8SN2">
    <property type="method" value="EM"/>
    <property type="resolution" value="3.60 A"/>
    <property type="chains" value="K=1-93"/>
</dbReference>
<dbReference type="PDB" id="8SN3">
    <property type="method" value="EM"/>
    <property type="resolution" value="3.80 A"/>
    <property type="chains" value="K=1-93"/>
</dbReference>
<dbReference type="PDB" id="8SN4">
    <property type="method" value="EM"/>
    <property type="resolution" value="3.70 A"/>
    <property type="chains" value="K=1-93"/>
</dbReference>
<dbReference type="PDB" id="8SN5">
    <property type="method" value="EM"/>
    <property type="resolution" value="3.90 A"/>
    <property type="chains" value="K=1-93"/>
</dbReference>
<dbReference type="PDB" id="8SN6">
    <property type="method" value="EM"/>
    <property type="resolution" value="3.70 A"/>
    <property type="chains" value="K=1-93"/>
</dbReference>
<dbReference type="PDB" id="8SN7">
    <property type="method" value="EM"/>
    <property type="resolution" value="3.70 A"/>
    <property type="chains" value="K=1-93"/>
</dbReference>
<dbReference type="PDB" id="8SN8">
    <property type="method" value="EM"/>
    <property type="resolution" value="3.70 A"/>
    <property type="chains" value="K=1-93"/>
</dbReference>
<dbReference type="PDB" id="8SN9">
    <property type="method" value="EM"/>
    <property type="resolution" value="3.90 A"/>
    <property type="chains" value="K=1-93"/>
</dbReference>
<dbReference type="PDB" id="8SNA">
    <property type="method" value="EM"/>
    <property type="resolution" value="4.00 A"/>
    <property type="chains" value="K=1-93"/>
</dbReference>
<dbReference type="PDB" id="8TXV">
    <property type="method" value="EM"/>
    <property type="resolution" value="3.80 A"/>
    <property type="chains" value="K=1-571"/>
</dbReference>
<dbReference type="PDB" id="8TXW">
    <property type="method" value="EM"/>
    <property type="resolution" value="3.60 A"/>
    <property type="chains" value="K=1-571"/>
</dbReference>
<dbReference type="PDB" id="8TXX">
    <property type="method" value="EM"/>
    <property type="resolution" value="3.70 A"/>
    <property type="chains" value="K=1-571"/>
</dbReference>
<dbReference type="PDB" id="8U13">
    <property type="method" value="EM"/>
    <property type="resolution" value="3.80 A"/>
    <property type="chains" value="K=1-94"/>
</dbReference>
<dbReference type="PDB" id="8U14">
    <property type="method" value="EM"/>
    <property type="resolution" value="3.90 A"/>
    <property type="chains" value="K=1-94"/>
</dbReference>
<dbReference type="PDB" id="8UPF">
    <property type="method" value="EM"/>
    <property type="resolution" value="3.20 A"/>
    <property type="chains" value="K=1-94"/>
</dbReference>
<dbReference type="PDB" id="8UQ8">
    <property type="method" value="X-ray"/>
    <property type="resolution" value="2.34 A"/>
    <property type="chains" value="A/a=1-94"/>
</dbReference>
<dbReference type="PDB" id="8UQ9">
    <property type="method" value="X-ray"/>
    <property type="resolution" value="2.30 A"/>
    <property type="chains" value="A/a=1-94"/>
</dbReference>
<dbReference type="PDB" id="8UQA">
    <property type="method" value="X-ray"/>
    <property type="resolution" value="2.05 A"/>
    <property type="chains" value="K=1-94"/>
</dbReference>
<dbReference type="PDB" id="8UQB">
    <property type="method" value="X-ray"/>
    <property type="resolution" value="2.48 A"/>
    <property type="chains" value="A=1-94"/>
</dbReference>
<dbReference type="PDB" id="8UQC">
    <property type="method" value="X-ray"/>
    <property type="resolution" value="2.61 A"/>
    <property type="chains" value="A=1-94"/>
</dbReference>
<dbReference type="PDB" id="8UQD">
    <property type="method" value="X-ray"/>
    <property type="resolution" value="3.89 A"/>
    <property type="chains" value="B=1-94"/>
</dbReference>
<dbReference type="PDB" id="8UQE">
    <property type="method" value="X-ray"/>
    <property type="resolution" value="3.56 A"/>
    <property type="chains" value="B=1-94"/>
</dbReference>
<dbReference type="PDB" id="8X7I">
    <property type="method" value="EM"/>
    <property type="resolution" value="3.27 A"/>
    <property type="chains" value="L=1-113"/>
</dbReference>
<dbReference type="PDB" id="8X7J">
    <property type="method" value="EM"/>
    <property type="resolution" value="3.39 A"/>
    <property type="chains" value="L=1-113"/>
</dbReference>
<dbReference type="PDB" id="8X7K">
    <property type="method" value="EM"/>
    <property type="resolution" value="3.27 A"/>
    <property type="chains" value="L=1-113"/>
</dbReference>
<dbReference type="PDB" id="9IPU">
    <property type="method" value="EM"/>
    <property type="resolution" value="4.30 A"/>
    <property type="chains" value="L=1-193"/>
</dbReference>
<dbReference type="PDBsum" id="3L11"/>
<dbReference type="PDBsum" id="4GB0"/>
<dbReference type="PDBsum" id="5XIS"/>
<dbReference type="PDBsum" id="5XIT"/>
<dbReference type="PDBsum" id="5XIU"/>
<dbReference type="PDBsum" id="5YDK"/>
<dbReference type="PDBsum" id="8SMW"/>
<dbReference type="PDBsum" id="8SMX"/>
<dbReference type="PDBsum" id="8SMY"/>
<dbReference type="PDBsum" id="8SMZ"/>
<dbReference type="PDBsum" id="8SN0"/>
<dbReference type="PDBsum" id="8SN1"/>
<dbReference type="PDBsum" id="8SN2"/>
<dbReference type="PDBsum" id="8SN3"/>
<dbReference type="PDBsum" id="8SN4"/>
<dbReference type="PDBsum" id="8SN5"/>
<dbReference type="PDBsum" id="8SN6"/>
<dbReference type="PDBsum" id="8SN7"/>
<dbReference type="PDBsum" id="8SN8"/>
<dbReference type="PDBsum" id="8SN9"/>
<dbReference type="PDBsum" id="8SNA"/>
<dbReference type="PDBsum" id="8TXV"/>
<dbReference type="PDBsum" id="8TXW"/>
<dbReference type="PDBsum" id="8TXX"/>
<dbReference type="PDBsum" id="8U13"/>
<dbReference type="PDBsum" id="8U14"/>
<dbReference type="PDBsum" id="8UPF"/>
<dbReference type="PDBsum" id="8UQ8"/>
<dbReference type="PDBsum" id="8UQ9"/>
<dbReference type="PDBsum" id="8UQA"/>
<dbReference type="PDBsum" id="8UQB"/>
<dbReference type="PDBsum" id="8UQC"/>
<dbReference type="PDBsum" id="8UQD"/>
<dbReference type="PDBsum" id="8UQE"/>
<dbReference type="PDBsum" id="8X7I"/>
<dbReference type="PDBsum" id="8X7J"/>
<dbReference type="PDBsum" id="8X7K"/>
<dbReference type="PDBsum" id="9IPU"/>
<dbReference type="EMDB" id="EMD-38099"/>
<dbReference type="EMDB" id="EMD-38100"/>
<dbReference type="EMDB" id="EMD-38101"/>
<dbReference type="EMDB" id="EMD-40604"/>
<dbReference type="EMDB" id="EMD-40605"/>
<dbReference type="EMDB" id="EMD-40606"/>
<dbReference type="EMDB" id="EMD-40607"/>
<dbReference type="EMDB" id="EMD-40608"/>
<dbReference type="EMDB" id="EMD-40609"/>
<dbReference type="EMDB" id="EMD-40610"/>
<dbReference type="EMDB" id="EMD-40611"/>
<dbReference type="EMDB" id="EMD-40612"/>
<dbReference type="EMDB" id="EMD-40613"/>
<dbReference type="EMDB" id="EMD-40614"/>
<dbReference type="EMDB" id="EMD-40615"/>
<dbReference type="EMDB" id="EMD-40616"/>
<dbReference type="EMDB" id="EMD-40617"/>
<dbReference type="EMDB" id="EMD-40618"/>
<dbReference type="EMDB" id="EMD-41706"/>
<dbReference type="EMDB" id="EMD-41707"/>
<dbReference type="EMDB" id="EMD-41708"/>
<dbReference type="EMDB" id="EMD-41800"/>
<dbReference type="EMDB" id="EMD-41801"/>
<dbReference type="EMDB" id="EMD-42446"/>
<dbReference type="EMDB" id="EMD-60781"/>
<dbReference type="SMR" id="Q8IYW5"/>
<dbReference type="BioGRID" id="127922">
    <property type="interactions" value="97"/>
</dbReference>
<dbReference type="DIP" id="DIP-37451N"/>
<dbReference type="FunCoup" id="Q8IYW5">
    <property type="interactions" value="1948"/>
</dbReference>
<dbReference type="IntAct" id="Q8IYW5">
    <property type="interactions" value="34"/>
</dbReference>
<dbReference type="MINT" id="Q8IYW5"/>
<dbReference type="STRING" id="9606.ENSP00000320898"/>
<dbReference type="BindingDB" id="Q8IYW5"/>
<dbReference type="ChEMBL" id="CHEMBL5169175"/>
<dbReference type="GlyGen" id="Q8IYW5">
    <property type="glycosylation" value="2 sites, 1 O-linked glycan (1 site)"/>
</dbReference>
<dbReference type="iPTMnet" id="Q8IYW5"/>
<dbReference type="PhosphoSitePlus" id="Q8IYW5"/>
<dbReference type="BioMuta" id="RNF168"/>
<dbReference type="DMDM" id="74762499"/>
<dbReference type="jPOST" id="Q8IYW5"/>
<dbReference type="MassIVE" id="Q8IYW5"/>
<dbReference type="PaxDb" id="9606-ENSP00000320898"/>
<dbReference type="PeptideAtlas" id="Q8IYW5"/>
<dbReference type="ProteomicsDB" id="71253"/>
<dbReference type="Pumba" id="Q8IYW5"/>
<dbReference type="Antibodypedia" id="33941">
    <property type="antibodies" value="231 antibodies from 30 providers"/>
</dbReference>
<dbReference type="CPTC" id="Q8IYW5">
    <property type="antibodies" value="1 antibody"/>
</dbReference>
<dbReference type="DNASU" id="165918"/>
<dbReference type="Ensembl" id="ENST00000318037.3">
    <property type="protein sequence ID" value="ENSP00000320898.3"/>
    <property type="gene ID" value="ENSG00000163961.4"/>
</dbReference>
<dbReference type="GeneID" id="165918"/>
<dbReference type="KEGG" id="hsa:165918"/>
<dbReference type="MANE-Select" id="ENST00000318037.3">
    <property type="protein sequence ID" value="ENSP00000320898.3"/>
    <property type="RefSeq nucleotide sequence ID" value="NM_152617.4"/>
    <property type="RefSeq protein sequence ID" value="NP_689830.2"/>
</dbReference>
<dbReference type="UCSC" id="uc003fwq.4">
    <property type="organism name" value="human"/>
</dbReference>
<dbReference type="AGR" id="HGNC:26661"/>
<dbReference type="CTD" id="165918"/>
<dbReference type="DisGeNET" id="165918"/>
<dbReference type="GeneCards" id="RNF168"/>
<dbReference type="HGNC" id="HGNC:26661">
    <property type="gene designation" value="RNF168"/>
</dbReference>
<dbReference type="HPA" id="ENSG00000163961">
    <property type="expression patterns" value="Low tissue specificity"/>
</dbReference>
<dbReference type="MalaCards" id="RNF168"/>
<dbReference type="MIM" id="611943">
    <property type="type" value="phenotype"/>
</dbReference>
<dbReference type="MIM" id="612688">
    <property type="type" value="gene"/>
</dbReference>
<dbReference type="neXtProt" id="NX_Q8IYW5"/>
<dbReference type="OpenTargets" id="ENSG00000163961"/>
<dbReference type="Orphanet" id="420741">
    <property type="disease" value="RIDDLE syndrome"/>
</dbReference>
<dbReference type="PharmGKB" id="PA134945219"/>
<dbReference type="VEuPathDB" id="HostDB:ENSG00000163961"/>
<dbReference type="eggNOG" id="KOG4159">
    <property type="taxonomic scope" value="Eukaryota"/>
</dbReference>
<dbReference type="GeneTree" id="ENSGT00940000153680"/>
<dbReference type="HOGENOM" id="CLU_030653_1_0_1"/>
<dbReference type="InParanoid" id="Q8IYW5"/>
<dbReference type="OMA" id="SWARYNT"/>
<dbReference type="OrthoDB" id="426657at2759"/>
<dbReference type="PAN-GO" id="Q8IYW5">
    <property type="GO annotations" value="5 GO annotations based on evolutionary models"/>
</dbReference>
<dbReference type="PhylomeDB" id="Q8IYW5"/>
<dbReference type="TreeFam" id="TF332796"/>
<dbReference type="PathwayCommons" id="Q8IYW5"/>
<dbReference type="Reactome" id="R-HSA-3108214">
    <property type="pathway name" value="SUMOylation of DNA damage response and repair proteins"/>
</dbReference>
<dbReference type="Reactome" id="R-HSA-5693565">
    <property type="pathway name" value="Recruitment and ATM-mediated phosphorylation of repair and signaling proteins at DNA double strand breaks"/>
</dbReference>
<dbReference type="Reactome" id="R-HSA-5693571">
    <property type="pathway name" value="Nonhomologous End-Joining (NHEJ)"/>
</dbReference>
<dbReference type="Reactome" id="R-HSA-5693607">
    <property type="pathway name" value="Processing of DNA double-strand break ends"/>
</dbReference>
<dbReference type="Reactome" id="R-HSA-69473">
    <property type="pathway name" value="G2/M DNA damage checkpoint"/>
</dbReference>
<dbReference type="SignaLink" id="Q8IYW5"/>
<dbReference type="SIGNOR" id="Q8IYW5"/>
<dbReference type="UniPathway" id="UPA00143"/>
<dbReference type="BioGRID-ORCS" id="165918">
    <property type="hits" value="384 hits in 1206 CRISPR screens"/>
</dbReference>
<dbReference type="CD-CODE" id="B5B9A610">
    <property type="entry name" value="PML body"/>
</dbReference>
<dbReference type="ChiTaRS" id="RNF168">
    <property type="organism name" value="human"/>
</dbReference>
<dbReference type="EvolutionaryTrace" id="Q8IYW5"/>
<dbReference type="GenomeRNAi" id="165918"/>
<dbReference type="Pharos" id="Q8IYW5">
    <property type="development level" value="Tbio"/>
</dbReference>
<dbReference type="PRO" id="PR:Q8IYW5"/>
<dbReference type="Proteomes" id="UP000005640">
    <property type="component" value="Chromosome 3"/>
</dbReference>
<dbReference type="RNAct" id="Q8IYW5">
    <property type="molecule type" value="protein"/>
</dbReference>
<dbReference type="Bgee" id="ENSG00000163961">
    <property type="expression patterns" value="Expressed in sperm and 184 other cell types or tissues"/>
</dbReference>
<dbReference type="ExpressionAtlas" id="Q8IYW5">
    <property type="expression patterns" value="baseline and differential"/>
</dbReference>
<dbReference type="GO" id="GO:0005829">
    <property type="term" value="C:cytosol"/>
    <property type="evidence" value="ECO:0000314"/>
    <property type="project" value="HPA"/>
</dbReference>
<dbReference type="GO" id="GO:0005654">
    <property type="term" value="C:nucleoplasm"/>
    <property type="evidence" value="ECO:0000314"/>
    <property type="project" value="HPA"/>
</dbReference>
<dbReference type="GO" id="GO:0005634">
    <property type="term" value="C:nucleus"/>
    <property type="evidence" value="ECO:0000314"/>
    <property type="project" value="UniProtKB"/>
</dbReference>
<dbReference type="GO" id="GO:0032991">
    <property type="term" value="C:protein-containing complex"/>
    <property type="evidence" value="ECO:0000314"/>
    <property type="project" value="MGI"/>
</dbReference>
<dbReference type="GO" id="GO:0035861">
    <property type="term" value="C:site of double-strand break"/>
    <property type="evidence" value="ECO:0000314"/>
    <property type="project" value="UniProtKB"/>
</dbReference>
<dbReference type="GO" id="GO:0000151">
    <property type="term" value="C:ubiquitin ligase complex"/>
    <property type="evidence" value="ECO:0000314"/>
    <property type="project" value="UniProtKB"/>
</dbReference>
<dbReference type="GO" id="GO:0003682">
    <property type="term" value="F:chromatin binding"/>
    <property type="evidence" value="ECO:0000314"/>
    <property type="project" value="UniProtKB"/>
</dbReference>
<dbReference type="GO" id="GO:0042393">
    <property type="term" value="F:histone binding"/>
    <property type="evidence" value="ECO:0000314"/>
    <property type="project" value="UniProtKB"/>
</dbReference>
<dbReference type="GO" id="GO:0140858">
    <property type="term" value="F:histone H2AK15 ubiquitin ligase activity"/>
    <property type="evidence" value="ECO:0000314"/>
    <property type="project" value="UniProtKB"/>
</dbReference>
<dbReference type="GO" id="GO:0140852">
    <property type="term" value="F:histone ubiquitin ligase activity"/>
    <property type="evidence" value="ECO:0000314"/>
    <property type="project" value="UniProtKB"/>
</dbReference>
<dbReference type="GO" id="GO:0070530">
    <property type="term" value="F:K63-linked polyubiquitin modification-dependent protein binding"/>
    <property type="evidence" value="ECO:0000314"/>
    <property type="project" value="UniProtKB"/>
</dbReference>
<dbReference type="GO" id="GO:0031491">
    <property type="term" value="F:nucleosome binding"/>
    <property type="evidence" value="ECO:0000314"/>
    <property type="project" value="UniProtKB"/>
</dbReference>
<dbReference type="GO" id="GO:0043130">
    <property type="term" value="F:ubiquitin binding"/>
    <property type="evidence" value="ECO:0000314"/>
    <property type="project" value="UniProtKB"/>
</dbReference>
<dbReference type="GO" id="GO:0004842">
    <property type="term" value="F:ubiquitin-protein transferase activity"/>
    <property type="evidence" value="ECO:0000314"/>
    <property type="project" value="UniProtKB"/>
</dbReference>
<dbReference type="GO" id="GO:0008270">
    <property type="term" value="F:zinc ion binding"/>
    <property type="evidence" value="ECO:0007669"/>
    <property type="project" value="UniProtKB-KW"/>
</dbReference>
<dbReference type="GO" id="GO:0006974">
    <property type="term" value="P:DNA damage response"/>
    <property type="evidence" value="ECO:0000314"/>
    <property type="project" value="UniProtKB"/>
</dbReference>
<dbReference type="GO" id="GO:0140861">
    <property type="term" value="P:DNA repair-dependent chromatin remodeling"/>
    <property type="evidence" value="ECO:0000314"/>
    <property type="project" value="UniProtKB"/>
</dbReference>
<dbReference type="GO" id="GO:0006302">
    <property type="term" value="P:double-strand break repair"/>
    <property type="evidence" value="ECO:0000314"/>
    <property type="project" value="UniProtKB"/>
</dbReference>
<dbReference type="GO" id="GO:0097680">
    <property type="term" value="P:double-strand break repair via classical nonhomologous end joining"/>
    <property type="evidence" value="ECO:0000314"/>
    <property type="project" value="UniProt"/>
</dbReference>
<dbReference type="GO" id="GO:0006303">
    <property type="term" value="P:double-strand break repair via nonhomologous end joining"/>
    <property type="evidence" value="ECO:0000314"/>
    <property type="project" value="UniProt"/>
</dbReference>
<dbReference type="GO" id="GO:0040029">
    <property type="term" value="P:epigenetic regulation of gene expression"/>
    <property type="evidence" value="ECO:0000315"/>
    <property type="project" value="UniProtKB"/>
</dbReference>
<dbReference type="GO" id="GO:0036297">
    <property type="term" value="P:interstrand cross-link repair"/>
    <property type="evidence" value="ECO:0000304"/>
    <property type="project" value="UniProtKB"/>
</dbReference>
<dbReference type="GO" id="GO:0045190">
    <property type="term" value="P:isotype switching"/>
    <property type="evidence" value="ECO:0000250"/>
    <property type="project" value="UniProtKB"/>
</dbReference>
<dbReference type="GO" id="GO:0034244">
    <property type="term" value="P:negative regulation of transcription elongation by RNA polymerase II"/>
    <property type="evidence" value="ECO:0000315"/>
    <property type="project" value="UniProtKB"/>
</dbReference>
<dbReference type="GO" id="GO:0045739">
    <property type="term" value="P:positive regulation of DNA repair"/>
    <property type="evidence" value="ECO:0000314"/>
    <property type="project" value="UniProtKB"/>
</dbReference>
<dbReference type="GO" id="GO:0070534">
    <property type="term" value="P:protein K63-linked ubiquitination"/>
    <property type="evidence" value="ECO:0000314"/>
    <property type="project" value="UniProtKB"/>
</dbReference>
<dbReference type="GO" id="GO:0016567">
    <property type="term" value="P:protein ubiquitination"/>
    <property type="evidence" value="ECO:0000314"/>
    <property type="project" value="UniProtKB"/>
</dbReference>
<dbReference type="GO" id="GO:0010212">
    <property type="term" value="P:response to ionizing radiation"/>
    <property type="evidence" value="ECO:0000314"/>
    <property type="project" value="UniProtKB"/>
</dbReference>
<dbReference type="GO" id="GO:0006511">
    <property type="term" value="P:ubiquitin-dependent protein catabolic process"/>
    <property type="evidence" value="ECO:0000314"/>
    <property type="project" value="UniProtKB"/>
</dbReference>
<dbReference type="CDD" id="cd21952">
    <property type="entry name" value="MIU2_RNF168"/>
    <property type="match status" value="1"/>
</dbReference>
<dbReference type="CDD" id="cd16550">
    <property type="entry name" value="RING-HC_RNF168"/>
    <property type="match status" value="1"/>
</dbReference>
<dbReference type="CDD" id="cd22265">
    <property type="entry name" value="UDM1_RNF168"/>
    <property type="match status" value="1"/>
</dbReference>
<dbReference type="DisProt" id="DP02405"/>
<dbReference type="FunFam" id="3.30.40.10:FF:000466">
    <property type="entry name" value="E3 ubiquitin-protein ligase RNF168"/>
    <property type="match status" value="1"/>
</dbReference>
<dbReference type="Gene3D" id="3.30.40.10">
    <property type="entry name" value="Zinc/RING finger domain, C3HC4 (zinc finger)"/>
    <property type="match status" value="1"/>
</dbReference>
<dbReference type="HAMAP" id="MF_03066">
    <property type="entry name" value="RNF168"/>
    <property type="match status" value="1"/>
</dbReference>
<dbReference type="InterPro" id="IPR034725">
    <property type="entry name" value="RNF168"/>
</dbReference>
<dbReference type="InterPro" id="IPR051657">
    <property type="entry name" value="RNF168/RNF169_E3_ubiq-ligase"/>
</dbReference>
<dbReference type="InterPro" id="IPR001841">
    <property type="entry name" value="Znf_RING"/>
</dbReference>
<dbReference type="InterPro" id="IPR013083">
    <property type="entry name" value="Znf_RING/FYVE/PHD"/>
</dbReference>
<dbReference type="PANTHER" id="PTHR23328:SF1">
    <property type="entry name" value="E3 UBIQUITIN-PROTEIN LIGASE RNF168"/>
    <property type="match status" value="1"/>
</dbReference>
<dbReference type="PANTHER" id="PTHR23328">
    <property type="entry name" value="RING-TYPE DOMAIN-CONTAINING PROTEIN"/>
    <property type="match status" value="1"/>
</dbReference>
<dbReference type="Pfam" id="PF14447">
    <property type="entry name" value="Prok-RING_4"/>
    <property type="match status" value="1"/>
</dbReference>
<dbReference type="SMART" id="SM00184">
    <property type="entry name" value="RING"/>
    <property type="match status" value="1"/>
</dbReference>
<dbReference type="SUPFAM" id="SSF57850">
    <property type="entry name" value="RING/U-box"/>
    <property type="match status" value="1"/>
</dbReference>
<dbReference type="PROSITE" id="PS50089">
    <property type="entry name" value="ZF_RING_2"/>
    <property type="match status" value="1"/>
</dbReference>
<evidence type="ECO:0000250" key="1">
    <source>
        <dbReference type="UniProtKB" id="B2RYR0"/>
    </source>
</evidence>
<evidence type="ECO:0000250" key="2">
    <source>
        <dbReference type="UniProtKB" id="Q80XJ2"/>
    </source>
</evidence>
<evidence type="ECO:0000255" key="3">
    <source>
        <dbReference type="HAMAP-Rule" id="MF_03066"/>
    </source>
</evidence>
<evidence type="ECO:0000256" key="4">
    <source>
        <dbReference type="SAM" id="MobiDB-lite"/>
    </source>
</evidence>
<evidence type="ECO:0000269" key="5">
    <source>
    </source>
</evidence>
<evidence type="ECO:0000269" key="6">
    <source>
    </source>
</evidence>
<evidence type="ECO:0000269" key="7">
    <source>
    </source>
</evidence>
<evidence type="ECO:0000269" key="8">
    <source>
    </source>
</evidence>
<evidence type="ECO:0000269" key="9">
    <source>
    </source>
</evidence>
<evidence type="ECO:0000269" key="10">
    <source>
    </source>
</evidence>
<evidence type="ECO:0000269" key="11">
    <source>
    </source>
</evidence>
<evidence type="ECO:0000269" key="12">
    <source>
    </source>
</evidence>
<evidence type="ECO:0000269" key="13">
    <source>
    </source>
</evidence>
<evidence type="ECO:0000269" key="14">
    <source>
    </source>
</evidence>
<evidence type="ECO:0000269" key="15">
    <source>
    </source>
</evidence>
<evidence type="ECO:0000269" key="16">
    <source>
    </source>
</evidence>
<evidence type="ECO:0000269" key="17">
    <source>
    </source>
</evidence>
<evidence type="ECO:0000269" key="18">
    <source>
    </source>
</evidence>
<evidence type="ECO:0000269" key="19">
    <source>
    </source>
</evidence>
<evidence type="ECO:0000305" key="20"/>
<evidence type="ECO:0000305" key="21">
    <source>
    </source>
</evidence>
<evidence type="ECO:0007744" key="22">
    <source>
    </source>
</evidence>
<evidence type="ECO:0007744" key="23">
    <source>
    </source>
</evidence>
<evidence type="ECO:0007744" key="24">
    <source>
    </source>
</evidence>
<evidence type="ECO:0007744" key="25">
    <source>
    </source>
</evidence>
<evidence type="ECO:0007829" key="26">
    <source>
        <dbReference type="PDB" id="3L11"/>
    </source>
</evidence>
<evidence type="ECO:0007829" key="27">
    <source>
        <dbReference type="PDB" id="5XIS"/>
    </source>
</evidence>
<evidence type="ECO:0007829" key="28">
    <source>
        <dbReference type="PDB" id="5XIU"/>
    </source>
</evidence>
<evidence type="ECO:0007829" key="29">
    <source>
        <dbReference type="PDB" id="8SMY"/>
    </source>
</evidence>
<evidence type="ECO:0007829" key="30">
    <source>
        <dbReference type="PDB" id="8UQ9"/>
    </source>
</evidence>
<evidence type="ECO:0007829" key="31">
    <source>
        <dbReference type="PDB" id="8UQA"/>
    </source>
</evidence>
<comment type="function">
    <text evidence="3 6 7 9 11 14 15 16 17 18 19">E3 ubiquitin-protein ligase required for accumulation of repair proteins to sites of DNA damage. Acts with UBE2N/UBC13 to amplify the RNF8-dependent histone ubiquitination. Recruited to sites of DNA damage at double-strand breaks (DSBs) by binding to ubiquitinated histone H2A and H2AX and amplifies the RNF8-dependent H2A ubiquitination, promoting the formation of 'Lys-63'-linked ubiquitin conjugates. This leads to concentrate ubiquitinated histones H2A and H2AX at DNA lesions to the threshold required for recruitment of TP53BP1 and BRCA1. Also recruited at DNA interstrand cross-links (ICLs) sites and promotes accumulation of 'Lys-63'-linked ubiquitination of histones H2A and H2AX, leading to recruitment of FAAP20/C1orf86 and Fanconi anemia (FA) complex, followed by interstrand cross-link repair. H2A ubiquitination also mediates the ATM-dependent transcriptional silencing at regions flanking DSBs in cis, a mechanism to avoid collision between transcription and repair intermediates. Also involved in class switch recombination in immune system, via its role in regulation of DSBs repair. Following DNA damage, promotes the ubiquitination and degradation of JMJD2A/KDM4A in collaboration with RNF8, leading to unmask H4K20me2 mark and promote the recruitment of TP53BP1 at DNA damage sites. Not able to initiate 'Lys-63'-linked ubiquitination in vitro; possibly due to partial occlusion of the UBE2N/UBC13-binding region. Catalyzes monoubiquitination of 'Lys-13' and 'Lys-15' of nucleosomal histone H2A (H2AK13Ub and H2AK15Ub, respectively).</text>
</comment>
<comment type="catalytic activity">
    <reaction evidence="3 6 7 8 11 17 19">
        <text>S-ubiquitinyl-[E2 ubiquitin-conjugating enzyme]-L-cysteine + [acceptor protein]-L-lysine = [E2 ubiquitin-conjugating enzyme]-L-cysteine + N(6)-ubiquitinyl-[acceptor protein]-L-lysine.</text>
        <dbReference type="EC" id="2.3.2.27"/>
    </reaction>
</comment>
<comment type="pathway">
    <text evidence="3">Protein modification; protein ubiquitination.</text>
</comment>
<comment type="subunit">
    <text evidence="3 6 13">Monomer. Interacts with UBE2N/UBC13.</text>
</comment>
<comment type="interaction">
    <interactant intactId="EBI-914207">
        <id>Q8IYW5</id>
    </interactant>
    <interactant intactId="EBI-3905054">
        <id>P13196</id>
        <label>ALAS1</label>
    </interactant>
    <organismsDiffer>false</organismsDiffer>
    <experiments>3</experiments>
</comment>
<comment type="interaction">
    <interactant intactId="EBI-914207">
        <id>Q8IYW5</id>
    </interactant>
    <interactant intactId="EBI-25840379">
        <id>Q14203-5</id>
        <label>DCTN1</label>
    </interactant>
    <organismsDiffer>false</organismsDiffer>
    <experiments>3</experiments>
</comment>
<comment type="interaction">
    <interactant intactId="EBI-914207">
        <id>Q8IYW5</id>
    </interactant>
    <interactant intactId="EBI-725224">
        <id>P07305</id>
        <label>H1-0</label>
    </interactant>
    <organismsDiffer>false</organismsDiffer>
    <experiments>2</experiments>
</comment>
<comment type="interaction">
    <interactant intactId="EBI-914207">
        <id>Q8IYW5</id>
    </interactant>
    <interactant intactId="EBI-396669">
        <id>Q9Y3C5</id>
        <label>RNF11</label>
    </interactant>
    <organismsDiffer>false</organismsDiffer>
    <experiments>4</experiments>
</comment>
<comment type="interaction">
    <interactant intactId="EBI-914207">
        <id>Q8IYW5</id>
    </interactant>
    <interactant intactId="EBI-985879">
        <id>P37840</id>
        <label>SNCA</label>
    </interactant>
    <organismsDiffer>false</organismsDiffer>
    <experiments>3</experiments>
</comment>
<comment type="interaction">
    <interactant intactId="EBI-914207">
        <id>Q8IYW5</id>
    </interactant>
    <interactant intactId="EBI-2340370">
        <id>Q9BZR9</id>
        <label>TRIM8</label>
    </interactant>
    <organismsDiffer>false</organismsDiffer>
    <experiments>3</experiments>
</comment>
<comment type="interaction">
    <interactant intactId="EBI-914207">
        <id>Q8IYW5</id>
    </interactant>
    <interactant intactId="EBI-1052908">
        <id>P61088</id>
        <label>UBE2N</label>
    </interactant>
    <organismsDiffer>false</organismsDiffer>
    <experiments>2</experiments>
</comment>
<comment type="interaction">
    <interactant intactId="EBI-914207">
        <id>Q8IYW5</id>
    </interactant>
    <interactant intactId="EBI-720609">
        <id>O76024</id>
        <label>WFS1</label>
    </interactant>
    <organismsDiffer>false</organismsDiffer>
    <experiments>3</experiments>
</comment>
<comment type="subcellular location">
    <subcellularLocation>
        <location evidence="3 6 7 8 10 16">Nucleus</location>
    </subcellularLocation>
    <text evidence="3">Localizes to double-strand breaks (DSBs) sites of DNA damage.</text>
</comment>
<comment type="domain">
    <text evidence="3 8 10 16">The MIU motif (motif interacting with ubiquitin) mediates the interaction with both 'Lys-48'- and 'Lys-63'-linked ubiquitin chains (PubMed:19500350). The UMI motif mediates interaction with ubiquitin with a preference for 'Lys-63'-linked ubiquitin (PubMed:21041483). The specificity for different types of ubiquitin is mediated by juxtaposition of ubiquitin-binding motifs (MIU and UMI motifs) with LR motifs (LRMs) (PubMed:22742833).</text>
</comment>
<comment type="PTM">
    <text evidence="3 12">Sumoylated with SUMO1 by PIAS4 in response to double-strand breaks (DSBs).</text>
</comment>
<comment type="PTM">
    <text evidence="3 8 10">Ubiquitinated.</text>
</comment>
<comment type="disease" evidence="6">
    <disease id="DI-02269">
        <name>Riddle syndrome</name>
        <acronym>RIDL</acronym>
        <description>An autosomal recessive disorder characterized by increased radiosensitivity, immunodeficiency, mild motor control and learning difficulties, facial dysmorphism, and short stature.</description>
        <dbReference type="MIM" id="611943"/>
    </disease>
    <text>The disease is caused by variants affecting the gene represented in this entry.</text>
</comment>
<comment type="similarity">
    <text evidence="3">Belongs to the RNF168 family.</text>
</comment>
<comment type="caution">
    <text evidence="3 21">According to a well-established model, RNF168 cannot initiate H2A 'Lys-63'-linked ubiquitination and is recruited following RNF8-dependent histone ubiquitination to amplify H2A 'Lys-63'-linked ubiquitination (PubMed:19203578, PubMed:19203579, PubMed:19500350). However, other data suggest that RNF168 is the priming ubiquitin ligase by mediating monoubiquitination of 'Lys-13' and 'Lys-15' of nucleosomal histone H2A (H2AK13Ub and H2AK15Ub respectively) (PubMed:22980979). These data suggest that RNF168 might be recruited to DSBs sites in a RNF8-dependent manner by binding to non-histone proteins ubiquitinated via 'Lys-63'-linked and initiates monoubiquitination of H2A, which is then amplified by RNF8 (PubMed:22980979). Additional evidence is however required to confirm these data.</text>
</comment>
<comment type="sequence caution" evidence="20">
    <conflict type="erroneous initiation">
        <sequence resource="EMBL-CDS" id="BAC04060"/>
    </conflict>
    <text>Truncated N-terminus.</text>
</comment>
<gene>
    <name evidence="3" type="primary">RNF168</name>
</gene>
<keyword id="KW-0002">3D-structure</keyword>
<keyword id="KW-0156">Chromatin regulator</keyword>
<keyword id="KW-0227">DNA damage</keyword>
<keyword id="KW-0234">DNA repair</keyword>
<keyword id="KW-1017">Isopeptide bond</keyword>
<keyword id="KW-0479">Metal-binding</keyword>
<keyword id="KW-0539">Nucleus</keyword>
<keyword id="KW-0597">Phosphoprotein</keyword>
<keyword id="KW-1267">Proteomics identification</keyword>
<keyword id="KW-1185">Reference proteome</keyword>
<keyword id="KW-0808">Transferase</keyword>
<keyword id="KW-0832">Ubl conjugation</keyword>
<keyword id="KW-0833">Ubl conjugation pathway</keyword>
<keyword id="KW-0862">Zinc</keyword>
<keyword id="KW-0863">Zinc-finger</keyword>
<feature type="chain" id="PRO_0000245596" description="E3 ubiquitin-protein ligase RNF168">
    <location>
        <begin position="1"/>
        <end position="571"/>
    </location>
</feature>
<feature type="zinc finger region" description="RING-type" evidence="3">
    <location>
        <begin position="16"/>
        <end position="55"/>
    </location>
</feature>
<feature type="region of interest" description="Disordered" evidence="4">
    <location>
        <begin position="151"/>
        <end position="174"/>
    </location>
</feature>
<feature type="region of interest" description="Disordered" evidence="4">
    <location>
        <begin position="191"/>
        <end position="292"/>
    </location>
</feature>
<feature type="region of interest" description="Disordered" evidence="4">
    <location>
        <begin position="390"/>
        <end position="422"/>
    </location>
</feature>
<feature type="region of interest" description="Disordered" evidence="4">
    <location>
        <begin position="459"/>
        <end position="560"/>
    </location>
</feature>
<feature type="short sequence motif" description="LR motif 1" evidence="3">
    <location>
        <begin position="110"/>
        <end position="128"/>
    </location>
</feature>
<feature type="short sequence motif" description="UMI motif" evidence="3">
    <location>
        <begin position="143"/>
        <end position="151"/>
    </location>
</feature>
<feature type="short sequence motif" description="MIU motif 1" evidence="3">
    <location>
        <begin position="168"/>
        <end position="191"/>
    </location>
</feature>
<feature type="short sequence motif" description="MIU motif 2" evidence="3">
    <location>
        <begin position="439"/>
        <end position="462"/>
    </location>
</feature>
<feature type="short sequence motif" description="LR motif 2" evidence="3">
    <location>
        <begin position="466"/>
        <end position="477"/>
    </location>
</feature>
<feature type="compositionally biased region" description="Basic and acidic residues" evidence="4">
    <location>
        <begin position="202"/>
        <end position="214"/>
    </location>
</feature>
<feature type="compositionally biased region" description="Polar residues" evidence="4">
    <location>
        <begin position="231"/>
        <end position="242"/>
    </location>
</feature>
<feature type="compositionally biased region" description="Basic and acidic residues" evidence="4">
    <location>
        <begin position="243"/>
        <end position="263"/>
    </location>
</feature>
<feature type="compositionally biased region" description="Basic and acidic residues" evidence="4">
    <location>
        <begin position="508"/>
        <end position="519"/>
    </location>
</feature>
<feature type="compositionally biased region" description="Polar residues" evidence="4">
    <location>
        <begin position="520"/>
        <end position="530"/>
    </location>
</feature>
<feature type="compositionally biased region" description="Polar residues" evidence="4">
    <location>
        <begin position="549"/>
        <end position="560"/>
    </location>
</feature>
<feature type="modified residue" description="Phosphoserine" evidence="2">
    <location>
        <position position="70"/>
    </location>
</feature>
<feature type="modified residue" description="Phosphoserine" evidence="24">
    <location>
        <position position="134"/>
    </location>
</feature>
<feature type="modified residue" description="Phosphoserine" evidence="1">
    <location>
        <position position="197"/>
    </location>
</feature>
<feature type="modified residue" description="Phosphothreonine" evidence="1">
    <location>
        <position position="362"/>
    </location>
</feature>
<feature type="modified residue" description="Phosphoserine" evidence="22 23 24">
    <location>
        <position position="411"/>
    </location>
</feature>
<feature type="modified residue" description="Phosphoserine" evidence="22 23">
    <location>
        <position position="414"/>
    </location>
</feature>
<feature type="modified residue" description="Phosphoserine" evidence="22 23">
    <location>
        <position position="415"/>
    </location>
</feature>
<feature type="modified residue" description="Phosphoserine" evidence="24">
    <location>
        <position position="470"/>
    </location>
</feature>
<feature type="cross-link" description="Glycyl lysine isopeptide (Lys-Gly) (interchain with G-Cter in SUMO2)" evidence="25">
    <location>
        <position position="210"/>
    </location>
</feature>
<feature type="cross-link" description="Glycyl lysine isopeptide (Lys-Gly) (interchain with G-Cter in SUMO2)" evidence="25">
    <location>
        <position position="528"/>
    </location>
</feature>
<feature type="sequence variant" id="VAR_034466" description="In dbSNP:rs35774921.">
    <original>K</original>
    <variation>R</variation>
    <location>
        <position position="387"/>
    </location>
</feature>
<feature type="sequence variant" id="VAR_026997" description="In dbSNP:rs3796129." evidence="5">
    <original>P</original>
    <variation>Q</variation>
    <location>
        <position position="401"/>
    </location>
</feature>
<feature type="sequence variant" id="VAR_052110" description="In dbSNP:rs6790173.">
    <original>E</original>
    <variation>K</variation>
    <location>
        <position position="413"/>
    </location>
</feature>
<feature type="mutagenesis site" description="Does not affect ability to bind ubiquitin and localization to DSBs sites, while it abolishes E3 ligase activity; when associated with S-19." evidence="8">
    <original>C</original>
    <variation>S</variation>
    <location>
        <position position="16"/>
    </location>
</feature>
<feature type="mutagenesis site" description="Abolishes ability to ubiquitinate KDM4A." evidence="11">
    <original>I</original>
    <variation>A</variation>
    <location>
        <position position="18"/>
    </location>
</feature>
<feature type="mutagenesis site" description="Does not affect ability to bind ubiquitin and localization to DSBs sites, while it abolishes E3 ligase activity; when associated with S-16." evidence="8">
    <original>C</original>
    <variation>S</variation>
    <location>
        <position position="19"/>
    </location>
</feature>
<feature type="mutagenesis site" description="Does not affect the monomeric structure but abolishes ability to monoubiquitinate H2A in nucleosomes." evidence="17">
    <original>R</original>
    <variation>D</variation>
    <location>
        <position position="57"/>
    </location>
</feature>
<feature type="mutagenesis site" description="Impaired ability to bind ubiquitin." evidence="10">
    <original>LL</original>
    <variation>AA</variation>
    <location>
        <begin position="149"/>
        <end position="150"/>
    </location>
</feature>
<feature type="mutagenesis site" description="Impairs ability to form foci following ionizing radiation and impaired binding to 'Lys-63'-linked ubiquitin." evidence="6 8 10">
    <original>A</original>
    <variation>G</variation>
    <location>
        <position position="179"/>
    </location>
</feature>
<feature type="mutagenesis site" description="Still able to bind 'Lys-63'-linked ubiquitin." evidence="6 8 10">
    <original>A</original>
    <variation>G</variation>
    <location>
        <position position="450"/>
    </location>
</feature>
<feature type="mutagenesis site" description="Does not affect ubiquitin-binding but impairs recruitment to DSBs." evidence="16">
    <original>LR</original>
    <variation>AA</variation>
    <location>
        <begin position="476"/>
        <end position="477"/>
    </location>
</feature>
<feature type="sequence conflict" description="In Ref. 1; BAB70801." evidence="20" ref="1">
    <original>P</original>
    <variation>L</variation>
    <location>
        <position position="9"/>
    </location>
</feature>
<feature type="helix" evidence="30">
    <location>
        <begin position="5"/>
        <end position="7"/>
    </location>
</feature>
<feature type="helix" evidence="26">
    <location>
        <begin position="11"/>
        <end position="14"/>
    </location>
</feature>
<feature type="turn" evidence="31">
    <location>
        <begin position="17"/>
        <end position="20"/>
    </location>
</feature>
<feature type="strand" evidence="31">
    <location>
        <begin position="24"/>
        <end position="28"/>
    </location>
</feature>
<feature type="turn" evidence="29">
    <location>
        <begin position="30"/>
        <end position="32"/>
    </location>
</feature>
<feature type="strand" evidence="31">
    <location>
        <begin position="34"/>
        <end position="36"/>
    </location>
</feature>
<feature type="helix" evidence="31">
    <location>
        <begin position="37"/>
        <end position="43"/>
    </location>
</feature>
<feature type="helix" evidence="31">
    <location>
        <begin position="44"/>
        <end position="48"/>
    </location>
</feature>
<feature type="turn" evidence="31">
    <location>
        <begin position="52"/>
        <end position="54"/>
    </location>
</feature>
<feature type="helix" evidence="31">
    <location>
        <begin position="59"/>
        <end position="66"/>
    </location>
</feature>
<feature type="turn" evidence="31">
    <location>
        <begin position="67"/>
        <end position="69"/>
    </location>
</feature>
<feature type="helix" evidence="31">
    <location>
        <begin position="74"/>
        <end position="83"/>
    </location>
</feature>
<feature type="helix" evidence="31">
    <location>
        <begin position="85"/>
        <end position="93"/>
    </location>
</feature>
<feature type="helix" evidence="27">
    <location>
        <begin position="115"/>
        <end position="187"/>
    </location>
</feature>
<feature type="helix" evidence="28">
    <location>
        <begin position="419"/>
        <end position="455"/>
    </location>
</feature>
<reference key="1">
    <citation type="journal article" date="2004" name="Nat. Genet.">
        <title>Complete sequencing and characterization of 21,243 full-length human cDNAs.</title>
        <authorList>
            <person name="Ota T."/>
            <person name="Suzuki Y."/>
            <person name="Nishikawa T."/>
            <person name="Otsuki T."/>
            <person name="Sugiyama T."/>
            <person name="Irie R."/>
            <person name="Wakamatsu A."/>
            <person name="Hayashi K."/>
            <person name="Sato H."/>
            <person name="Nagai K."/>
            <person name="Kimura K."/>
            <person name="Makita H."/>
            <person name="Sekine M."/>
            <person name="Obayashi M."/>
            <person name="Nishi T."/>
            <person name="Shibahara T."/>
            <person name="Tanaka T."/>
            <person name="Ishii S."/>
            <person name="Yamamoto J."/>
            <person name="Saito K."/>
            <person name="Kawai Y."/>
            <person name="Isono Y."/>
            <person name="Nakamura Y."/>
            <person name="Nagahari K."/>
            <person name="Murakami K."/>
            <person name="Yasuda T."/>
            <person name="Iwayanagi T."/>
            <person name="Wagatsuma M."/>
            <person name="Shiratori A."/>
            <person name="Sudo H."/>
            <person name="Hosoiri T."/>
            <person name="Kaku Y."/>
            <person name="Kodaira H."/>
            <person name="Kondo H."/>
            <person name="Sugawara M."/>
            <person name="Takahashi M."/>
            <person name="Kanda K."/>
            <person name="Yokoi T."/>
            <person name="Furuya T."/>
            <person name="Kikkawa E."/>
            <person name="Omura Y."/>
            <person name="Abe K."/>
            <person name="Kamihara K."/>
            <person name="Katsuta N."/>
            <person name="Sato K."/>
            <person name="Tanikawa M."/>
            <person name="Yamazaki M."/>
            <person name="Ninomiya K."/>
            <person name="Ishibashi T."/>
            <person name="Yamashita H."/>
            <person name="Murakawa K."/>
            <person name="Fujimori K."/>
            <person name="Tanai H."/>
            <person name="Kimata M."/>
            <person name="Watanabe M."/>
            <person name="Hiraoka S."/>
            <person name="Chiba Y."/>
            <person name="Ishida S."/>
            <person name="Ono Y."/>
            <person name="Takiguchi S."/>
            <person name="Watanabe S."/>
            <person name="Yosida M."/>
            <person name="Hotuta T."/>
            <person name="Kusano J."/>
            <person name="Kanehori K."/>
            <person name="Takahashi-Fujii A."/>
            <person name="Hara H."/>
            <person name="Tanase T.-O."/>
            <person name="Nomura Y."/>
            <person name="Togiya S."/>
            <person name="Komai F."/>
            <person name="Hara R."/>
            <person name="Takeuchi K."/>
            <person name="Arita M."/>
            <person name="Imose N."/>
            <person name="Musashino K."/>
            <person name="Yuuki H."/>
            <person name="Oshima A."/>
            <person name="Sasaki N."/>
            <person name="Aotsuka S."/>
            <person name="Yoshikawa Y."/>
            <person name="Matsunawa H."/>
            <person name="Ichihara T."/>
            <person name="Shiohata N."/>
            <person name="Sano S."/>
            <person name="Moriya S."/>
            <person name="Momiyama H."/>
            <person name="Satoh N."/>
            <person name="Takami S."/>
            <person name="Terashima Y."/>
            <person name="Suzuki O."/>
            <person name="Nakagawa S."/>
            <person name="Senoh A."/>
            <person name="Mizoguchi H."/>
            <person name="Goto Y."/>
            <person name="Shimizu F."/>
            <person name="Wakebe H."/>
            <person name="Hishigaki H."/>
            <person name="Watanabe T."/>
            <person name="Sugiyama A."/>
            <person name="Takemoto M."/>
            <person name="Kawakami B."/>
            <person name="Yamazaki M."/>
            <person name="Watanabe K."/>
            <person name="Kumagai A."/>
            <person name="Itakura S."/>
            <person name="Fukuzumi Y."/>
            <person name="Fujimori Y."/>
            <person name="Komiyama M."/>
            <person name="Tashiro H."/>
            <person name="Tanigami A."/>
            <person name="Fujiwara T."/>
            <person name="Ono T."/>
            <person name="Yamada K."/>
            <person name="Fujii Y."/>
            <person name="Ozaki K."/>
            <person name="Hirao M."/>
            <person name="Ohmori Y."/>
            <person name="Kawabata A."/>
            <person name="Hikiji T."/>
            <person name="Kobatake N."/>
            <person name="Inagaki H."/>
            <person name="Ikema Y."/>
            <person name="Okamoto S."/>
            <person name="Okitani R."/>
            <person name="Kawakami T."/>
            <person name="Noguchi S."/>
            <person name="Itoh T."/>
            <person name="Shigeta K."/>
            <person name="Senba T."/>
            <person name="Matsumura K."/>
            <person name="Nakajima Y."/>
            <person name="Mizuno T."/>
            <person name="Morinaga M."/>
            <person name="Sasaki M."/>
            <person name="Togashi T."/>
            <person name="Oyama M."/>
            <person name="Hata H."/>
            <person name="Watanabe M."/>
            <person name="Komatsu T."/>
            <person name="Mizushima-Sugano J."/>
            <person name="Satoh T."/>
            <person name="Shirai Y."/>
            <person name="Takahashi Y."/>
            <person name="Nakagawa K."/>
            <person name="Okumura K."/>
            <person name="Nagase T."/>
            <person name="Nomura N."/>
            <person name="Kikuchi H."/>
            <person name="Masuho Y."/>
            <person name="Yamashita R."/>
            <person name="Nakai K."/>
            <person name="Yada T."/>
            <person name="Nakamura Y."/>
            <person name="Ohara O."/>
            <person name="Isogai T."/>
            <person name="Sugano S."/>
        </authorList>
    </citation>
    <scope>NUCLEOTIDE SEQUENCE [LARGE SCALE MRNA]</scope>
    <scope>VARIANT GLN-401</scope>
    <source>
        <tissue>Cerebellum</tissue>
        <tissue>Testis</tissue>
    </source>
</reference>
<reference key="2">
    <citation type="journal article" date="2006" name="Nature">
        <title>The DNA sequence, annotation and analysis of human chromosome 3.</title>
        <authorList>
            <person name="Muzny D.M."/>
            <person name="Scherer S.E."/>
            <person name="Kaul R."/>
            <person name="Wang J."/>
            <person name="Yu J."/>
            <person name="Sudbrak R."/>
            <person name="Buhay C.J."/>
            <person name="Chen R."/>
            <person name="Cree A."/>
            <person name="Ding Y."/>
            <person name="Dugan-Rocha S."/>
            <person name="Gill R."/>
            <person name="Gunaratne P."/>
            <person name="Harris R.A."/>
            <person name="Hawes A.C."/>
            <person name="Hernandez J."/>
            <person name="Hodgson A.V."/>
            <person name="Hume J."/>
            <person name="Jackson A."/>
            <person name="Khan Z.M."/>
            <person name="Kovar-Smith C."/>
            <person name="Lewis L.R."/>
            <person name="Lozado R.J."/>
            <person name="Metzker M.L."/>
            <person name="Milosavljevic A."/>
            <person name="Miner G.R."/>
            <person name="Morgan M.B."/>
            <person name="Nazareth L.V."/>
            <person name="Scott G."/>
            <person name="Sodergren E."/>
            <person name="Song X.-Z."/>
            <person name="Steffen D."/>
            <person name="Wei S."/>
            <person name="Wheeler D.A."/>
            <person name="Wright M.W."/>
            <person name="Worley K.C."/>
            <person name="Yuan Y."/>
            <person name="Zhang Z."/>
            <person name="Adams C.Q."/>
            <person name="Ansari-Lari M.A."/>
            <person name="Ayele M."/>
            <person name="Brown M.J."/>
            <person name="Chen G."/>
            <person name="Chen Z."/>
            <person name="Clendenning J."/>
            <person name="Clerc-Blankenburg K.P."/>
            <person name="Chen R."/>
            <person name="Chen Z."/>
            <person name="Davis C."/>
            <person name="Delgado O."/>
            <person name="Dinh H.H."/>
            <person name="Dong W."/>
            <person name="Draper H."/>
            <person name="Ernst S."/>
            <person name="Fu G."/>
            <person name="Gonzalez-Garay M.L."/>
            <person name="Garcia D.K."/>
            <person name="Gillett W."/>
            <person name="Gu J."/>
            <person name="Hao B."/>
            <person name="Haugen E."/>
            <person name="Havlak P."/>
            <person name="He X."/>
            <person name="Hennig S."/>
            <person name="Hu S."/>
            <person name="Huang W."/>
            <person name="Jackson L.R."/>
            <person name="Jacob L.S."/>
            <person name="Kelly S.H."/>
            <person name="Kube M."/>
            <person name="Levy R."/>
            <person name="Li Z."/>
            <person name="Liu B."/>
            <person name="Liu J."/>
            <person name="Liu W."/>
            <person name="Lu J."/>
            <person name="Maheshwari M."/>
            <person name="Nguyen B.-V."/>
            <person name="Okwuonu G.O."/>
            <person name="Palmeiri A."/>
            <person name="Pasternak S."/>
            <person name="Perez L.M."/>
            <person name="Phelps K.A."/>
            <person name="Plopper F.J."/>
            <person name="Qiang B."/>
            <person name="Raymond C."/>
            <person name="Rodriguez R."/>
            <person name="Saenphimmachak C."/>
            <person name="Santibanez J."/>
            <person name="Shen H."/>
            <person name="Shen Y."/>
            <person name="Subramanian S."/>
            <person name="Tabor P.E."/>
            <person name="Verduzco D."/>
            <person name="Waldron L."/>
            <person name="Wang J."/>
            <person name="Wang J."/>
            <person name="Wang Q."/>
            <person name="Williams G.A."/>
            <person name="Wong G.K.-S."/>
            <person name="Yao Z."/>
            <person name="Zhang J."/>
            <person name="Zhang X."/>
            <person name="Zhao G."/>
            <person name="Zhou J."/>
            <person name="Zhou Y."/>
            <person name="Nelson D."/>
            <person name="Lehrach H."/>
            <person name="Reinhardt R."/>
            <person name="Naylor S.L."/>
            <person name="Yang H."/>
            <person name="Olson M."/>
            <person name="Weinstock G."/>
            <person name="Gibbs R.A."/>
        </authorList>
    </citation>
    <scope>NUCLEOTIDE SEQUENCE [LARGE SCALE GENOMIC DNA]</scope>
</reference>
<reference key="3">
    <citation type="journal article" date="2004" name="Genome Res.">
        <title>The status, quality, and expansion of the NIH full-length cDNA project: the Mammalian Gene Collection (MGC).</title>
        <authorList>
            <consortium name="The MGC Project Team"/>
        </authorList>
    </citation>
    <scope>NUCLEOTIDE SEQUENCE [LARGE SCALE MRNA]</scope>
    <source>
        <tissue>Brain</tissue>
    </source>
</reference>
<reference key="4">
    <citation type="journal article" date="2008" name="Proc. Natl. Acad. Sci. U.S.A.">
        <title>A quantitative atlas of mitotic phosphorylation.</title>
        <authorList>
            <person name="Dephoure N."/>
            <person name="Zhou C."/>
            <person name="Villen J."/>
            <person name="Beausoleil S.A."/>
            <person name="Bakalarski C.E."/>
            <person name="Elledge S.J."/>
            <person name="Gygi S.P."/>
        </authorList>
    </citation>
    <scope>PHOSPHORYLATION [LARGE SCALE ANALYSIS] AT SER-411; SER-414 AND SER-415</scope>
    <scope>IDENTIFICATION BY MASS SPECTROMETRY [LARGE SCALE ANALYSIS]</scope>
    <source>
        <tissue>Cervix carcinoma</tissue>
    </source>
</reference>
<reference key="5">
    <citation type="journal article" date="2009" name="BMC Mol. Biol.">
        <title>RNF168, a new RING finger, MIU-containing protein that modifies chromatin by ubiquitination of histones H2A and H2AX.</title>
        <authorList>
            <person name="Pinato S."/>
            <person name="Scandiuzzi C."/>
            <person name="Arnaudo N."/>
            <person name="Citterio E."/>
            <person name="Gaudino G."/>
            <person name="Penengo L."/>
        </authorList>
    </citation>
    <scope>UBIQUITIN-BINDING</scope>
    <scope>CATALYTIC ACTIVITY</scope>
    <scope>MIU MOTIF</scope>
    <scope>SUBCELLULAR LOCATION</scope>
    <scope>UBIQUITINATION</scope>
    <scope>MUTAGENESIS OF CYS-16; CYS-19; ALA-179 AND ALA-450</scope>
</reference>
<reference key="6">
    <citation type="journal article" date="2009" name="Cell">
        <title>The RIDDLE syndrome protein mediates a ubiquitin-dependent signaling cascade at sites of DNA damage.</title>
        <authorList>
            <person name="Stewart G.S."/>
            <person name="Panier S."/>
            <person name="Townsend K."/>
            <person name="Al-Hakim A.K."/>
            <person name="Kolas N.K."/>
            <person name="Miller E.S."/>
            <person name="Nakada S."/>
            <person name="Ylanko J."/>
            <person name="Olivarius S."/>
            <person name="Mendez M."/>
            <person name="Oldreive C."/>
            <person name="Wildenhain J."/>
            <person name="Tagliaferro A."/>
            <person name="Pelletier L."/>
            <person name="Taubenheim N."/>
            <person name="Durandy A."/>
            <person name="Byrd P.J."/>
            <person name="Stankovic T."/>
            <person name="Taylor A.M.R."/>
            <person name="Durocher D."/>
        </authorList>
    </citation>
    <scope>INVOLVEMENT IN RIDL</scope>
    <scope>FUNCTION</scope>
    <scope>CATALYTIC ACTIVITY</scope>
    <scope>SUBCELLULAR LOCATION</scope>
    <scope>INTERACTION WITH UBE2N</scope>
    <scope>MUTAGENESIS OF ALA-179 AND ALA-450</scope>
</reference>
<reference key="7">
    <citation type="journal article" date="2009" name="Cell">
        <title>RNF168 binds and amplifies ubiquitin conjugates on damaged chromosomes to allow accumulation of repair proteins.</title>
        <authorList>
            <person name="Doil C."/>
            <person name="Mailand N."/>
            <person name="Bekker-Jensen S."/>
            <person name="Menard P."/>
            <person name="Larsen D.H."/>
            <person name="Pepperkok R."/>
            <person name="Ellenberg J."/>
            <person name="Panier S."/>
            <person name="Durocher D."/>
            <person name="Bartek J."/>
            <person name="Lukas J."/>
            <person name="Lukas C."/>
        </authorList>
    </citation>
    <scope>FUNCTION</scope>
    <scope>CATALYTIC ACTIVITY</scope>
    <scope>SUBCELLULAR LOCATION</scope>
</reference>
<reference key="8">
    <citation type="journal article" date="2009" name="Sci. Signal.">
        <title>Quantitative phosphoproteomic analysis of T cell receptor signaling reveals system-wide modulation of protein-protein interactions.</title>
        <authorList>
            <person name="Mayya V."/>
            <person name="Lundgren D.H."/>
            <person name="Hwang S.-I."/>
            <person name="Rezaul K."/>
            <person name="Wu L."/>
            <person name="Eng J.K."/>
            <person name="Rodionov V."/>
            <person name="Han D.K."/>
        </authorList>
    </citation>
    <scope>PHOSPHORYLATION [LARGE SCALE ANALYSIS] AT SER-411; SER-414 AND SER-415</scope>
    <scope>IDENTIFICATION BY MASS SPECTROMETRY [LARGE SCALE ANALYSIS]</scope>
    <source>
        <tissue>Leukemic T-cell</tissue>
    </source>
</reference>
<reference key="9">
    <citation type="journal article" date="2010" name="Cell">
        <title>ATM-dependent chromatin changes silence transcription in cis to DNA double-strand breaks.</title>
        <authorList>
            <person name="Shanbhag N.M."/>
            <person name="Rafalska-Metcalf I.U."/>
            <person name="Balane-Bolivar C."/>
            <person name="Janicki S.M."/>
            <person name="Greenberg R.A."/>
        </authorList>
    </citation>
    <scope>FUNCTION</scope>
</reference>
<reference key="10">
    <citation type="journal article" date="2011" name="Mol. Cell. Biol.">
        <title>UMI, a novel RNF168 ubiquitin binding domain involved in the DNA damage signaling pathway.</title>
        <authorList>
            <person name="Pinato S."/>
            <person name="Gatti M."/>
            <person name="Scandiuzzi C."/>
            <person name="Confalonieri S."/>
            <person name="Penengo L."/>
        </authorList>
    </citation>
    <scope>UBIQUITIN-BINDING</scope>
    <scope>UMI MOTIF</scope>
    <scope>SUBCELLULAR LOCATION</scope>
    <scope>UBIQUITINATION</scope>
    <scope>MUTAGENESIS OF 149-LEU-LEU-150; ALA-179 AND ALA-450</scope>
</reference>
<reference key="11">
    <citation type="journal article" date="2012" name="Cell Cycle">
        <title>A novel ubiquitin mark at the N-terminal tail of histone H2As targeted by RNF168 ubiquitin ligase.</title>
        <authorList>
            <person name="Gatti M."/>
            <person name="Pinato S."/>
            <person name="Maspero E."/>
            <person name="Soffientini P."/>
            <person name="Polo S."/>
            <person name="Penengo L."/>
        </authorList>
    </citation>
    <scope>FUNCTION</scope>
</reference>
<reference key="12">
    <citation type="journal article" date="2012" name="EMBO J.">
        <title>RNF8- and RNF168-dependent degradation of KDM4A/JMJD2A triggers 53BP1 recruitment to DNA damage sites.</title>
        <authorList>
            <person name="Mallette F.A."/>
            <person name="Mattiroli F."/>
            <person name="Cui G."/>
            <person name="Young L.C."/>
            <person name="Hendzel M.J."/>
            <person name="Mer G."/>
            <person name="Sixma T.K."/>
            <person name="Richard S."/>
        </authorList>
    </citation>
    <scope>FUNCTION IN UBIQUITINATION OF KDM4A</scope>
    <scope>CATALYTIC ACTIVITY</scope>
    <scope>MUTAGENESIS OF ILE-18</scope>
</reference>
<reference key="13">
    <citation type="journal article" date="2012" name="J. Cell Biol.">
        <title>DNA damage-inducible SUMOylation of HERC2 promotes RNF8 binding via a novel SUMO-binding Zinc finger.</title>
        <authorList>
            <person name="Danielsen J.R."/>
            <person name="Povlsen L.K."/>
            <person name="Villumsen B.H."/>
            <person name="Streicher W."/>
            <person name="Nilsson J."/>
            <person name="Wikstrom M."/>
            <person name="Bekker-Jensen S."/>
            <person name="Mailand N."/>
        </authorList>
    </citation>
    <scope>SUMOYLATION</scope>
</reference>
<reference key="14">
    <citation type="journal article" date="2012" name="Mol. Cell">
        <title>A ubiquitin-binding protein, FAAP20, links RNF8-mediated ubiquitination to the Fanconi anemia DNA repair network.</title>
        <authorList>
            <person name="Yan Z."/>
            <person name="Guo R."/>
            <person name="Paramasivam M."/>
            <person name="Shen W."/>
            <person name="Ling C."/>
            <person name="Fox D. III"/>
            <person name="Wang Y."/>
            <person name="Oostra A.B."/>
            <person name="Kuehl J."/>
            <person name="Lee D.Y."/>
            <person name="Takata M."/>
            <person name="Hoatlin M.E."/>
            <person name="Schindler D."/>
            <person name="Joenje H."/>
            <person name="de Winter J.P."/>
            <person name="Li L."/>
            <person name="Seidman M.M."/>
            <person name="Wang W."/>
        </authorList>
    </citation>
    <scope>FUNCTION</scope>
</reference>
<reference key="15">
    <citation type="journal article" date="2012" name="Mol. Cell">
        <title>Tandem protein interaction modules organize the ubiquitin-dependent response to DNA double-strand breaks.</title>
        <authorList>
            <person name="Panier S."/>
            <person name="Ichijima Y."/>
            <person name="Fradet-Turcotte A."/>
            <person name="Leung C.C."/>
            <person name="Kaustov L."/>
            <person name="Arrowsmith C.H."/>
            <person name="Durocher D."/>
        </authorList>
    </citation>
    <scope>FUNCTION</scope>
    <scope>UBIQUITIN-BINDING</scope>
    <scope>LR MOTIF</scope>
    <scope>SUBCELLULAR LOCATION</scope>
    <scope>MUTAGENESIS OF 476-LEU-ARG-477</scope>
</reference>
<reference key="16">
    <citation type="journal article" date="2012" name="Cell">
        <title>RNF168 ubiquitinates K13-15 on H2A/H2AX to drive DNA Damage signaling.</title>
        <authorList>
            <person name="Mattiroli F."/>
            <person name="Vissers J.H."/>
            <person name="van Dijk W.J."/>
            <person name="Ikpa P."/>
            <person name="Citterio E."/>
            <person name="Vermeulen W."/>
            <person name="Marteijn J.A."/>
            <person name="Sixma T.K."/>
        </authorList>
    </citation>
    <scope>FUNCTION</scope>
    <scope>CATALYTIC ACTIVITY</scope>
    <scope>MUTAGENESIS OF ARG-57</scope>
</reference>
<reference key="17">
    <citation type="journal article" date="2013" name="J. Proteome Res.">
        <title>Toward a comprehensive characterization of a human cancer cell phosphoproteome.</title>
        <authorList>
            <person name="Zhou H."/>
            <person name="Di Palma S."/>
            <person name="Preisinger C."/>
            <person name="Peng M."/>
            <person name="Polat A.N."/>
            <person name="Heck A.J."/>
            <person name="Mohammed S."/>
        </authorList>
    </citation>
    <scope>PHOSPHORYLATION [LARGE SCALE ANALYSIS] AT SER-134; SER-411 AND SER-470</scope>
    <scope>IDENTIFICATION BY MASS SPECTROMETRY [LARGE SCALE ANALYSIS]</scope>
    <source>
        <tissue>Cervix carcinoma</tissue>
        <tissue>Erythroleukemia</tissue>
    </source>
</reference>
<reference key="18">
    <citation type="journal article" date="2013" name="Nature">
        <title>53BP1 is a reader of the DNA-damage-induced H2A Lys 15 ubiquitin mark.</title>
        <authorList>
            <person name="Fradet-Turcotte A."/>
            <person name="Canny M.D."/>
            <person name="Escribano-Diaz C."/>
            <person name="Orthwein A."/>
            <person name="Leung C.C."/>
            <person name="Huang H."/>
            <person name="Landry M.C."/>
            <person name="Kitevski-LeBlanc J."/>
            <person name="Noordermeer S.M."/>
            <person name="Sicheri F."/>
            <person name="Durocher D."/>
        </authorList>
    </citation>
    <scope>FUNCTION</scope>
</reference>
<reference key="19">
    <citation type="journal article" date="2016" name="Mol. Cell">
        <title>The TIP60 complex regulates bivalent chromatin recognition by 53BP1 through direct H4K20me binding and H2AK15 acetylation.</title>
        <authorList>
            <person name="Jacquet K."/>
            <person name="Fradet-Turcotte A."/>
            <person name="Avvakumov N."/>
            <person name="Lambert J.P."/>
            <person name="Roques C."/>
            <person name="Pandita R.K."/>
            <person name="Paquet E."/>
            <person name="Herst P."/>
            <person name="Gingras A.C."/>
            <person name="Pandita T.K."/>
            <person name="Legube G."/>
            <person name="Doyon Y."/>
            <person name="Durocher D."/>
            <person name="Cote J."/>
        </authorList>
    </citation>
    <scope>FUNCTION</scope>
    <scope>CATALYTIC ACTIVITY</scope>
</reference>
<reference key="20">
    <citation type="journal article" date="2017" name="Nat. Struct. Mol. Biol.">
        <title>Site-specific mapping of the human SUMO proteome reveals co-modification with phosphorylation.</title>
        <authorList>
            <person name="Hendriks I.A."/>
            <person name="Lyon D."/>
            <person name="Young C."/>
            <person name="Jensen L.J."/>
            <person name="Vertegaal A.C."/>
            <person name="Nielsen M.L."/>
        </authorList>
    </citation>
    <scope>SUMOYLATION [LARGE SCALE ANALYSIS] AT LYS-210 AND LYS-528</scope>
    <scope>IDENTIFICATION BY MASS SPECTROMETRY [LARGE SCALE ANALYSIS]</scope>
</reference>
<reference key="21">
    <citation type="journal article" date="2012" name="J. Biol. Chem.">
        <title>Molecular insights into the function of RING Finger (RNF)-containing proteins hRNF8 and hRNF168 in Ubc13/Mms2-dependent ubiquitylation.</title>
        <authorList>
            <person name="Campbell S.J."/>
            <person name="Edwards R.A."/>
            <person name="Leung C.C."/>
            <person name="Neculai D."/>
            <person name="Hodge C.D."/>
            <person name="Dhe-Paganon S."/>
            <person name="Glover J.N."/>
        </authorList>
    </citation>
    <scope>X-RAY CRYSTALLOGRAPHY (2.12 ANGSTROMS) OF 1-113</scope>
    <scope>SUBUNIT</scope>
</reference>
<name>RN168_HUMAN</name>
<sequence length="571" mass="65020">MALPKDAIPSLSECQCGICMEILVEPVTLPCNHTLCKPCFQSTVEKASLCCPFCRRRVSSWTRYHTRRNSLVNVELWTIIQKHYPRECKLRASGQESEEVADDYQPVRLLSKPGELRREYEEEISKVAAERRASEEEENKASEEYIQRLLAEEEEEEKRQAEKRRRAMEEQLKSDEELARKLSIDINNFCEGSISASPLNSRKSDPVTPKSEKKSKNKQRNTGDIQKYLTPKSQFGSASHSEAVQEVRKDSVSKDIDSSDRKSPTGQDTEIEDMPTLSPQISLGVGEQGADSSIESPMPWLCACGAEWYHEGNVKTRPSNHGKELCVLSHERPKTRVPYSKETAVMPCGRTESGCAPTSGVTQTNGNNTGETENEESCLLISKEISKRKNQESSFEAVKDPCFSAKRRKVSPESSPDQEETEINFTQKLIDLEHLLFERHKQEEQDRLLALQLQKEVDKEQMVPNRQKGSPDEYHLRATSSPPDKVLNGQRKNPKDGNFKRQTHTKHPTPERGSRDKNRQVSLKMQLKQSVNRRKMPNSTRDHCKVSKSAHSLQPSISQKSVFQMFQRCTK</sequence>
<accession>Q8IYW5</accession>
<accession>Q8NA67</accession>
<accession>Q96NS4</accession>
<protein>
    <recommendedName>
        <fullName evidence="3">E3 ubiquitin-protein ligase RNF168</fullName>
        <shortName>hRNF168</shortName>
        <ecNumber evidence="3 19">2.3.2.27</ecNumber>
    </recommendedName>
    <alternativeName>
        <fullName evidence="3">RING finger protein 168</fullName>
    </alternativeName>
    <alternativeName>
        <fullName>RING-type E3 ubiquitin transferase RNF168</fullName>
    </alternativeName>
</protein>